<protein>
    <recommendedName>
        <fullName>Alkaline phosphatase isozyme conversion protein</fullName>
        <ecNumber>3.4.11.-</ecNumber>
    </recommendedName>
</protein>
<proteinExistence type="inferred from homology"/>
<comment type="function">
    <text>This protein, presumably an aminopeptidase, mediates the conversion of E.coli alkaline phosphatase isozyme 1, to isozymes 2 and 3 by removing, one by one, the two N-terminal arginine residues.</text>
</comment>
<comment type="similarity">
    <text evidence="2">Belongs to the peptidase M28 family. M28C subfamily.</text>
</comment>
<organism>
    <name type="scientific">Escherichia coli (strain K12)</name>
    <dbReference type="NCBI Taxonomy" id="83333"/>
    <lineage>
        <taxon>Bacteria</taxon>
        <taxon>Pseudomonadati</taxon>
        <taxon>Pseudomonadota</taxon>
        <taxon>Gammaproteobacteria</taxon>
        <taxon>Enterobacterales</taxon>
        <taxon>Enterobacteriaceae</taxon>
        <taxon>Escherichia</taxon>
    </lineage>
</organism>
<gene>
    <name type="primary">iap</name>
    <name type="ordered locus">b2753</name>
    <name type="ordered locus">JW2723</name>
</gene>
<dbReference type="EC" id="3.4.11.-"/>
<dbReference type="EMBL" id="M18270">
    <property type="protein sequence ID" value="AAA24005.1"/>
    <property type="molecule type" value="Genomic_DNA"/>
</dbReference>
<dbReference type="EMBL" id="U29579">
    <property type="protein sequence ID" value="AAA69263.1"/>
    <property type="molecule type" value="Genomic_DNA"/>
</dbReference>
<dbReference type="EMBL" id="U00096">
    <property type="protein sequence ID" value="AAC75795.1"/>
    <property type="molecule type" value="Genomic_DNA"/>
</dbReference>
<dbReference type="EMBL" id="AP009048">
    <property type="protein sequence ID" value="BAE76830.1"/>
    <property type="molecule type" value="Genomic_DNA"/>
</dbReference>
<dbReference type="EMBL" id="M74586">
    <property type="protein sequence ID" value="AAA23644.1"/>
    <property type="molecule type" value="Genomic_DNA"/>
</dbReference>
<dbReference type="PIR" id="A28382">
    <property type="entry name" value="KZEC"/>
</dbReference>
<dbReference type="RefSeq" id="NP_417233.1">
    <property type="nucleotide sequence ID" value="NC_000913.3"/>
</dbReference>
<dbReference type="RefSeq" id="WP_000490428.1">
    <property type="nucleotide sequence ID" value="NZ_LN832404.1"/>
</dbReference>
<dbReference type="SMR" id="P10423"/>
<dbReference type="BioGRID" id="4259465">
    <property type="interactions" value="28"/>
</dbReference>
<dbReference type="FunCoup" id="P10423">
    <property type="interactions" value="7"/>
</dbReference>
<dbReference type="STRING" id="511145.b2753"/>
<dbReference type="MEROPS" id="M28.005"/>
<dbReference type="PaxDb" id="511145-b2753"/>
<dbReference type="DNASU" id="947215"/>
<dbReference type="EnsemblBacteria" id="AAC75795">
    <property type="protein sequence ID" value="AAC75795"/>
    <property type="gene ID" value="b2753"/>
</dbReference>
<dbReference type="GeneID" id="947215"/>
<dbReference type="KEGG" id="ecj:JW2723"/>
<dbReference type="KEGG" id="eco:b2753"/>
<dbReference type="KEGG" id="ecoc:C3026_15135"/>
<dbReference type="PATRIC" id="fig|1411691.4.peg.3987"/>
<dbReference type="EchoBASE" id="EB0483"/>
<dbReference type="eggNOG" id="COG2234">
    <property type="taxonomic scope" value="Bacteria"/>
</dbReference>
<dbReference type="HOGENOM" id="CLU_049425_1_0_6"/>
<dbReference type="InParanoid" id="P10423"/>
<dbReference type="OMA" id="EATNWSL"/>
<dbReference type="OrthoDB" id="9762302at2"/>
<dbReference type="PhylomeDB" id="P10423"/>
<dbReference type="BioCyc" id="EcoCyc:EG10488-MONOMER"/>
<dbReference type="BioCyc" id="MetaCyc:EG10488-MONOMER"/>
<dbReference type="PRO" id="PR:P10423"/>
<dbReference type="Proteomes" id="UP000000625">
    <property type="component" value="Chromosome"/>
</dbReference>
<dbReference type="GO" id="GO:0030288">
    <property type="term" value="C:outer membrane-bounded periplasmic space"/>
    <property type="evidence" value="ECO:0000314"/>
    <property type="project" value="EcoCyc"/>
</dbReference>
<dbReference type="GO" id="GO:0004177">
    <property type="term" value="F:aminopeptidase activity"/>
    <property type="evidence" value="ECO:0000314"/>
    <property type="project" value="EcoCyc"/>
</dbReference>
<dbReference type="GO" id="GO:0046872">
    <property type="term" value="F:metal ion binding"/>
    <property type="evidence" value="ECO:0007669"/>
    <property type="project" value="UniProtKB-KW"/>
</dbReference>
<dbReference type="GO" id="GO:0008235">
    <property type="term" value="F:metalloexopeptidase activity"/>
    <property type="evidence" value="ECO:0007669"/>
    <property type="project" value="InterPro"/>
</dbReference>
<dbReference type="GO" id="GO:0043687">
    <property type="term" value="P:post-translational protein modification"/>
    <property type="evidence" value="ECO:0000315"/>
    <property type="project" value="EcoCyc"/>
</dbReference>
<dbReference type="GO" id="GO:0006508">
    <property type="term" value="P:proteolysis"/>
    <property type="evidence" value="ECO:0000318"/>
    <property type="project" value="GO_Central"/>
</dbReference>
<dbReference type="FunFam" id="3.40.630.10:FF:000038">
    <property type="entry name" value="Alkaline phosphatase isozyme conversion"/>
    <property type="match status" value="1"/>
</dbReference>
<dbReference type="Gene3D" id="3.40.630.10">
    <property type="entry name" value="Zn peptidases"/>
    <property type="match status" value="1"/>
</dbReference>
<dbReference type="InterPro" id="IPR045175">
    <property type="entry name" value="M28_fam"/>
</dbReference>
<dbReference type="InterPro" id="IPR007484">
    <property type="entry name" value="Peptidase_M28"/>
</dbReference>
<dbReference type="NCBIfam" id="NF007568">
    <property type="entry name" value="PRK10199.1"/>
    <property type="match status" value="1"/>
</dbReference>
<dbReference type="PANTHER" id="PTHR12147:SF56">
    <property type="entry name" value="AMINOPEPTIDASE YDR415C-RELATED"/>
    <property type="match status" value="1"/>
</dbReference>
<dbReference type="PANTHER" id="PTHR12147">
    <property type="entry name" value="METALLOPEPTIDASE M28 FAMILY MEMBER"/>
    <property type="match status" value="1"/>
</dbReference>
<dbReference type="Pfam" id="PF04389">
    <property type="entry name" value="Peptidase_M28"/>
    <property type="match status" value="1"/>
</dbReference>
<dbReference type="SUPFAM" id="SSF53187">
    <property type="entry name" value="Zn-dependent exopeptidases"/>
    <property type="match status" value="1"/>
</dbReference>
<accession>P10423</accession>
<accession>Q2MA76</accession>
<evidence type="ECO:0000250" key="1"/>
<evidence type="ECO:0000305" key="2"/>
<sequence length="345" mass="37920">MFSALRHRTAALALGVCFILPVHASSPKPGDFANTQARHIATFFPGRMTGTPAEMLSADYIRQQFQQMGYRSDIRTFNSRYIYTARDNRKSWHNVTGSTVIAAHEGKAPQQIIIMAHLDTYAPLSDADADANLGGLTLQGMDDNAAGLGVMLELAERLKNTPTEYGIRFVATSGEEEGKLGAENLLKRMSDTEKKNTLLVINLDNLIVGDKLYFNSGVKTPEAVRKLTRDRALAIARSHGIAATTNPGLNKNYPKGTGCCNDAEIFDKAGIAVLSVEATNWNLGNKDGYQQRAKTPAFPAGNSWHDVRLDNHQHIDKALPGRIERRCRDVMRIMLPLVKELAKAS</sequence>
<feature type="signal peptide" evidence="2">
    <location>
        <begin position="1"/>
        <end position="24"/>
    </location>
</feature>
<feature type="chain" id="PRO_0000026855" description="Alkaline phosphatase isozyme conversion protein">
    <location>
        <begin position="25"/>
        <end position="345"/>
    </location>
</feature>
<feature type="binding site" evidence="1">
    <location>
        <position position="117"/>
    </location>
    <ligand>
        <name>Zn(2+)</name>
        <dbReference type="ChEBI" id="CHEBI:29105"/>
        <label>1</label>
    </ligand>
</feature>
<feature type="binding site" evidence="1">
    <location>
        <position position="143"/>
    </location>
    <ligand>
        <name>Zn(2+)</name>
        <dbReference type="ChEBI" id="CHEBI:29105"/>
        <label>1</label>
    </ligand>
</feature>
<feature type="binding site" evidence="1">
    <location>
        <position position="143"/>
    </location>
    <ligand>
        <name>Zn(2+)</name>
        <dbReference type="ChEBI" id="CHEBI:29105"/>
        <label>2</label>
        <note>catalytic</note>
    </ligand>
</feature>
<feature type="binding site" evidence="1">
    <location>
        <position position="176"/>
    </location>
    <ligand>
        <name>Zn(2+)</name>
        <dbReference type="ChEBI" id="CHEBI:29105"/>
        <label>2</label>
        <note>catalytic</note>
    </ligand>
</feature>
<feature type="binding site" evidence="1">
    <location>
        <position position="204"/>
    </location>
    <ligand>
        <name>Zn(2+)</name>
        <dbReference type="ChEBI" id="CHEBI:29105"/>
        <label>1</label>
    </ligand>
</feature>
<reference key="1">
    <citation type="journal article" date="1987" name="J. Bacteriol.">
        <title>Nucleotide sequence of the iap gene, responsible for alkaline phosphatase isozyme conversion in Escherichia coli, and identification of the gene product.</title>
        <authorList>
            <person name="Ishino Y."/>
            <person name="Shinagawa H."/>
            <person name="Makino K."/>
            <person name="Amemura M."/>
            <person name="Nakata A."/>
        </authorList>
    </citation>
    <scope>NUCLEOTIDE SEQUENCE [GENOMIC DNA]</scope>
</reference>
<reference key="2">
    <citation type="journal article" date="1997" name="Science">
        <title>The complete genome sequence of Escherichia coli K-12.</title>
        <authorList>
            <person name="Blattner F.R."/>
            <person name="Plunkett G. III"/>
            <person name="Bloch C.A."/>
            <person name="Perna N.T."/>
            <person name="Burland V."/>
            <person name="Riley M."/>
            <person name="Collado-Vides J."/>
            <person name="Glasner J.D."/>
            <person name="Rode C.K."/>
            <person name="Mayhew G.F."/>
            <person name="Gregor J."/>
            <person name="Davis N.W."/>
            <person name="Kirkpatrick H.A."/>
            <person name="Goeden M.A."/>
            <person name="Rose D.J."/>
            <person name="Mau B."/>
            <person name="Shao Y."/>
        </authorList>
    </citation>
    <scope>NUCLEOTIDE SEQUENCE [LARGE SCALE GENOMIC DNA]</scope>
    <source>
        <strain>K12 / MG1655 / ATCC 47076</strain>
    </source>
</reference>
<reference key="3">
    <citation type="journal article" date="2006" name="Mol. Syst. Biol.">
        <title>Highly accurate genome sequences of Escherichia coli K-12 strains MG1655 and W3110.</title>
        <authorList>
            <person name="Hayashi K."/>
            <person name="Morooka N."/>
            <person name="Yamamoto Y."/>
            <person name="Fujita K."/>
            <person name="Isono K."/>
            <person name="Choi S."/>
            <person name="Ohtsubo E."/>
            <person name="Baba T."/>
            <person name="Wanner B.L."/>
            <person name="Mori H."/>
            <person name="Horiuchi T."/>
        </authorList>
    </citation>
    <scope>NUCLEOTIDE SEQUENCE [LARGE SCALE GENOMIC DNA]</scope>
    <source>
        <strain>K12 / W3110 / ATCC 27325 / DSM 5911</strain>
    </source>
</reference>
<reference key="4">
    <citation type="journal article" date="1992" name="J. Biol. Chem.">
        <title>The DNA sequence of the sulfate activation locus from Escherichia coli K-12.</title>
        <authorList>
            <person name="Leyh T.S."/>
            <person name="Vogt T.F."/>
            <person name="Suo Y."/>
        </authorList>
    </citation>
    <scope>NUCLEOTIDE SEQUENCE [GENOMIC DNA] OF 1-111</scope>
    <source>
        <strain>K12</strain>
    </source>
</reference>
<name>IAP_ECOLI</name>
<keyword id="KW-0031">Aminopeptidase</keyword>
<keyword id="KW-0378">Hydrolase</keyword>
<keyword id="KW-0479">Metal-binding</keyword>
<keyword id="KW-0645">Protease</keyword>
<keyword id="KW-1185">Reference proteome</keyword>
<keyword id="KW-0732">Signal</keyword>
<keyword id="KW-0862">Zinc</keyword>